<evidence type="ECO:0000255" key="1">
    <source>
        <dbReference type="HAMAP-Rule" id="MF_01452"/>
    </source>
</evidence>
<feature type="chain" id="PRO_0000379177" description="ATP-dependent helicase/deoxyribonuclease subunit B">
    <location>
        <begin position="1"/>
        <end position="1155"/>
    </location>
</feature>
<feature type="binding site" evidence="1">
    <location>
        <begin position="8"/>
        <end position="15"/>
    </location>
    <ligand>
        <name>ATP</name>
        <dbReference type="ChEBI" id="CHEBI:30616"/>
    </ligand>
</feature>
<feature type="binding site" evidence="1">
    <location>
        <position position="793"/>
    </location>
    <ligand>
        <name>[4Fe-4S] cluster</name>
        <dbReference type="ChEBI" id="CHEBI:49883"/>
    </ligand>
</feature>
<feature type="binding site" evidence="1">
    <location>
        <position position="1115"/>
    </location>
    <ligand>
        <name>[4Fe-4S] cluster</name>
        <dbReference type="ChEBI" id="CHEBI:49883"/>
    </ligand>
</feature>
<feature type="binding site" evidence="1">
    <location>
        <position position="1118"/>
    </location>
    <ligand>
        <name>[4Fe-4S] cluster</name>
        <dbReference type="ChEBI" id="CHEBI:49883"/>
    </ligand>
</feature>
<feature type="binding site" evidence="1">
    <location>
        <position position="1124"/>
    </location>
    <ligand>
        <name>[4Fe-4S] cluster</name>
        <dbReference type="ChEBI" id="CHEBI:49883"/>
    </ligand>
</feature>
<protein>
    <recommendedName>
        <fullName evidence="1">ATP-dependent helicase/deoxyribonuclease subunit B</fullName>
        <ecNumber evidence="1">3.1.-.-</ecNumber>
    </recommendedName>
    <alternativeName>
        <fullName evidence="1">ATP-dependent helicase/nuclease subunit AddB</fullName>
    </alternativeName>
</protein>
<organism>
    <name type="scientific">Clostridioides difficile (strain 630)</name>
    <name type="common">Peptoclostridium difficile</name>
    <dbReference type="NCBI Taxonomy" id="272563"/>
    <lineage>
        <taxon>Bacteria</taxon>
        <taxon>Bacillati</taxon>
        <taxon>Bacillota</taxon>
        <taxon>Clostridia</taxon>
        <taxon>Peptostreptococcales</taxon>
        <taxon>Peptostreptococcaceae</taxon>
        <taxon>Clostridioides</taxon>
    </lineage>
</organism>
<dbReference type="EC" id="3.1.-.-" evidence="1"/>
<dbReference type="EMBL" id="AM180355">
    <property type="protein sequence ID" value="CAJ67881.1"/>
    <property type="molecule type" value="Genomic_DNA"/>
</dbReference>
<dbReference type="RefSeq" id="WP_011861078.1">
    <property type="nucleotide sequence ID" value="NZ_JAUPES010000006.1"/>
</dbReference>
<dbReference type="RefSeq" id="YP_001087521.1">
    <property type="nucleotide sequence ID" value="NC_009089.1"/>
</dbReference>
<dbReference type="SMR" id="Q18AP0"/>
<dbReference type="STRING" id="272563.CD630_10400"/>
<dbReference type="EnsemblBacteria" id="CAJ67881">
    <property type="protein sequence ID" value="CAJ67881"/>
    <property type="gene ID" value="CD630_10400"/>
</dbReference>
<dbReference type="KEGG" id="cdf:CD630_10400"/>
<dbReference type="KEGG" id="pdc:CDIF630_01180"/>
<dbReference type="PATRIC" id="fig|272563.120.peg.1080"/>
<dbReference type="eggNOG" id="COG3857">
    <property type="taxonomic scope" value="Bacteria"/>
</dbReference>
<dbReference type="OrthoDB" id="9758506at2"/>
<dbReference type="PhylomeDB" id="Q18AP0"/>
<dbReference type="BioCyc" id="PDIF272563:G12WB-1159-MONOMER"/>
<dbReference type="Proteomes" id="UP000001978">
    <property type="component" value="Chromosome"/>
</dbReference>
<dbReference type="GO" id="GO:0051539">
    <property type="term" value="F:4 iron, 4 sulfur cluster binding"/>
    <property type="evidence" value="ECO:0007669"/>
    <property type="project" value="UniProtKB-KW"/>
</dbReference>
<dbReference type="GO" id="GO:0008409">
    <property type="term" value="F:5'-3' exonuclease activity"/>
    <property type="evidence" value="ECO:0007669"/>
    <property type="project" value="UniProtKB-UniRule"/>
</dbReference>
<dbReference type="GO" id="GO:0005524">
    <property type="term" value="F:ATP binding"/>
    <property type="evidence" value="ECO:0007669"/>
    <property type="project" value="UniProtKB-UniRule"/>
</dbReference>
<dbReference type="GO" id="GO:0003690">
    <property type="term" value="F:double-stranded DNA binding"/>
    <property type="evidence" value="ECO:0007669"/>
    <property type="project" value="UniProtKB-UniRule"/>
</dbReference>
<dbReference type="GO" id="GO:0004386">
    <property type="term" value="F:helicase activity"/>
    <property type="evidence" value="ECO:0007669"/>
    <property type="project" value="UniProtKB-KW"/>
</dbReference>
<dbReference type="GO" id="GO:0046872">
    <property type="term" value="F:metal ion binding"/>
    <property type="evidence" value="ECO:0007669"/>
    <property type="project" value="UniProtKB-KW"/>
</dbReference>
<dbReference type="GO" id="GO:0000724">
    <property type="term" value="P:double-strand break repair via homologous recombination"/>
    <property type="evidence" value="ECO:0007669"/>
    <property type="project" value="UniProtKB-UniRule"/>
</dbReference>
<dbReference type="Gene3D" id="3.90.320.10">
    <property type="match status" value="1"/>
</dbReference>
<dbReference type="Gene3D" id="3.40.50.300">
    <property type="entry name" value="P-loop containing nucleotide triphosphate hydrolases"/>
    <property type="match status" value="3"/>
</dbReference>
<dbReference type="HAMAP" id="MF_01452">
    <property type="entry name" value="AddB_type1"/>
    <property type="match status" value="1"/>
</dbReference>
<dbReference type="InterPro" id="IPR049035">
    <property type="entry name" value="ADDB_N"/>
</dbReference>
<dbReference type="InterPro" id="IPR014140">
    <property type="entry name" value="DNA_helicase_suAddB"/>
</dbReference>
<dbReference type="InterPro" id="IPR027417">
    <property type="entry name" value="P-loop_NTPase"/>
</dbReference>
<dbReference type="InterPro" id="IPR011604">
    <property type="entry name" value="PDDEXK-like_dom_sf"/>
</dbReference>
<dbReference type="InterPro" id="IPR038726">
    <property type="entry name" value="PDDEXK_AddAB-type"/>
</dbReference>
<dbReference type="NCBIfam" id="TIGR02773">
    <property type="entry name" value="addB_Gpos"/>
    <property type="match status" value="1"/>
</dbReference>
<dbReference type="PANTHER" id="PTHR30591">
    <property type="entry name" value="RECBCD ENZYME SUBUNIT RECC"/>
    <property type="match status" value="1"/>
</dbReference>
<dbReference type="PANTHER" id="PTHR30591:SF1">
    <property type="entry name" value="RECBCD ENZYME SUBUNIT RECC"/>
    <property type="match status" value="1"/>
</dbReference>
<dbReference type="Pfam" id="PF21445">
    <property type="entry name" value="ADDB_N"/>
    <property type="match status" value="1"/>
</dbReference>
<dbReference type="Pfam" id="PF12705">
    <property type="entry name" value="PDDEXK_1"/>
    <property type="match status" value="1"/>
</dbReference>
<dbReference type="SUPFAM" id="SSF52540">
    <property type="entry name" value="P-loop containing nucleoside triphosphate hydrolases"/>
    <property type="match status" value="1"/>
</dbReference>
<proteinExistence type="inferred from homology"/>
<comment type="function">
    <text evidence="1">The heterodimer acts as both an ATP-dependent DNA helicase and an ATP-dependent, dual-direction single-stranded exonuclease. Recognizes the chi site generating a DNA molecule suitable for the initiation of homologous recombination. The AddB subunit has 5' -&gt; 3' nuclease activity but not helicase activity.</text>
</comment>
<comment type="cofactor">
    <cofactor evidence="1">
        <name>Mg(2+)</name>
        <dbReference type="ChEBI" id="CHEBI:18420"/>
    </cofactor>
</comment>
<comment type="cofactor">
    <cofactor evidence="1">
        <name>[4Fe-4S] cluster</name>
        <dbReference type="ChEBI" id="CHEBI:49883"/>
    </cofactor>
    <text evidence="1">Binds 1 [4Fe-4S] cluster.</text>
</comment>
<comment type="subunit">
    <text evidence="1">Heterodimer of AddA and AddB.</text>
</comment>
<comment type="miscellaneous">
    <text evidence="1">Despite having conserved helicase domains, this subunit does not have helicase activity.</text>
</comment>
<comment type="similarity">
    <text evidence="1">Belongs to the helicase family. AddB/RexB type 1 subfamily.</text>
</comment>
<accession>Q18AP0</accession>
<name>ADDB_CLOD6</name>
<reference key="1">
    <citation type="journal article" date="2006" name="Nat. Genet.">
        <title>The multidrug-resistant human pathogen Clostridium difficile has a highly mobile, mosaic genome.</title>
        <authorList>
            <person name="Sebaihia M."/>
            <person name="Wren B.W."/>
            <person name="Mullany P."/>
            <person name="Fairweather N.F."/>
            <person name="Minton N."/>
            <person name="Stabler R."/>
            <person name="Thomson N.R."/>
            <person name="Roberts A.P."/>
            <person name="Cerdeno-Tarraga A.M."/>
            <person name="Wang H."/>
            <person name="Holden M.T.G."/>
            <person name="Wright A."/>
            <person name="Churcher C."/>
            <person name="Quail M.A."/>
            <person name="Baker S."/>
            <person name="Bason N."/>
            <person name="Brooks K."/>
            <person name="Chillingworth T."/>
            <person name="Cronin A."/>
            <person name="Davis P."/>
            <person name="Dowd L."/>
            <person name="Fraser A."/>
            <person name="Feltwell T."/>
            <person name="Hance Z."/>
            <person name="Holroyd S."/>
            <person name="Jagels K."/>
            <person name="Moule S."/>
            <person name="Mungall K."/>
            <person name="Price C."/>
            <person name="Rabbinowitsch E."/>
            <person name="Sharp S."/>
            <person name="Simmonds M."/>
            <person name="Stevens K."/>
            <person name="Unwin L."/>
            <person name="Whithead S."/>
            <person name="Dupuy B."/>
            <person name="Dougan G."/>
            <person name="Barrell B."/>
            <person name="Parkhill J."/>
        </authorList>
    </citation>
    <scope>NUCLEOTIDE SEQUENCE [LARGE SCALE GENOMIC DNA]</scope>
    <source>
        <strain>630</strain>
    </source>
</reference>
<keyword id="KW-0004">4Fe-4S</keyword>
<keyword id="KW-0067">ATP-binding</keyword>
<keyword id="KW-0227">DNA damage</keyword>
<keyword id="KW-0234">DNA repair</keyword>
<keyword id="KW-0238">DNA-binding</keyword>
<keyword id="KW-0269">Exonuclease</keyword>
<keyword id="KW-0347">Helicase</keyword>
<keyword id="KW-0378">Hydrolase</keyword>
<keyword id="KW-0408">Iron</keyword>
<keyword id="KW-0411">Iron-sulfur</keyword>
<keyword id="KW-0479">Metal-binding</keyword>
<keyword id="KW-0540">Nuclease</keyword>
<keyword id="KW-0547">Nucleotide-binding</keyword>
<keyword id="KW-1185">Reference proteome</keyword>
<gene>
    <name evidence="1" type="primary">addB</name>
    <name type="ordered locus">CD630_10400</name>
</gene>
<sequence length="1155" mass="133531">MGLRFVLGRSGSGKSTYILDEIKKEAQKNETTSIILLVPEQYTFEAENRVSKLFLGKEKDKYLRVRVLSFKTLSNIVFSQVGGLTDVNINSSGKAMMVYRAIEDVSEELNVFSKSKSQSGFVSSITDMISEMKQYNISPEMLENISGELDNETLSLKLKDISKIYNSFEGKLHENYVDAQDMLTSLTSKIELSSYLDGACVYIDEFTGFTPNQYNVIKSILNKSKSVNISLTVDDINYIGYSKSDMFSRTKFTYSKLTQLCNEEGIKILPQVNLNTGVIKRFEKVKELQHLERFYNAYPYKIYSNPTENIKIKEFNNLYSEVEEIAREIVHLVRDKNVRYRDITIATRDLNRYDFLVHSIFNEYNIPNFIDKKREAKSNPIVILIISALEMKNRRYGYETMFRYLKSGLIGIDNDDINLLENYVLANGIKGKKWFDEKWDYRITQSLSGQESEFELELKEKINEIKNRVLEPIVILQEKLRGKNRVKEICRYIYEFLLDINMPETIESLIVNFKDKGELDVANQYSQVWDIVVDILDQMVELMGDEIISLEKFIKLITLGFDEYELGLVPPSIDQVLVSSVDRMKNPDTKYLYLVGTTDGVFPLITKDSGILSDNDRESLGNKGIEVDIDSKTRSFEEQFLVYKALTSTSKNLTITYPISDHEGKTLRPSIIISRLKKIFPNIENKSYLVEENKNTDKDILKKITVKSPTFNELINVIKNYDSDGYNTEEINSIWLDIYRYYLKDEIYSSITKKVIKGLSYTNQVHKIEEKKIRSLYKSNSLSISRLEKYAECPFAYFIQYGLKAKKRKEYSFTPPDLGTFIHNILDRFSKELLQDNLTWRDIDEKYIELKIGIIVDEIILKIPGYILNSSERYKYLAYRLKNMLTTAITIISQQIKQGSFEPIDYEVKFGDNGKYPPIKMVLENGQEVSLIGQIDRVDEFEEGENKYIRIIDYKSGNKSISLTEIYYGLQLQLLVYLDAILESAKDEDMNINPAAILYCRINNPIAKFNEDKDDEEIQEAILKELRMKGLVVKDSHIVKEMDKSLIDGERKNSLVIPVGLTKDGNVGKSTSAISYEDFKLLRKYVRHAIKDLCEEMLSGEIRIAPYKHKDGTSCDFCDYSAICQFDSTIKDNKYKNLNNKSNEEIIKMMKGDVN</sequence>